<name>TRY3_CANAL</name>
<proteinExistence type="evidence at transcript level"/>
<organism>
    <name type="scientific">Candida albicans (strain SC5314 / ATCC MYA-2876)</name>
    <name type="common">Yeast</name>
    <dbReference type="NCBI Taxonomy" id="237561"/>
    <lineage>
        <taxon>Eukaryota</taxon>
        <taxon>Fungi</taxon>
        <taxon>Dikarya</taxon>
        <taxon>Ascomycota</taxon>
        <taxon>Saccharomycotina</taxon>
        <taxon>Pichiomycetes</taxon>
        <taxon>Debaryomycetaceae</taxon>
        <taxon>Candida/Lodderomyces clade</taxon>
        <taxon>Candida</taxon>
    </lineage>
</organism>
<gene>
    <name type="primary">TRY3</name>
    <name type="ordered locus">CAALFM_C500980WA</name>
    <name type="ORF">CaO19.1971</name>
    <name type="ORF">CaO19.9527</name>
</gene>
<sequence length="494" mass="57301">MKFAKTLERTLEEDEIPQEWVEAAIQYKALKKCINKVVNELEFLGLQKNTLKILLNDKVVEVNEQETNPSNPIIAEYILSKTSTDAHNIKPMLKITLDYSSEDYTKDHIVELGKELKQKIEALLNDSDTEYEEDKIIELKEDDGGDLQIVTSREGSLSPPASRMASPPTSPTLKVVDSLNTNIDEALLSPDDHHKKHEIFIMLNSDSKFFEMLNDELNSLDTLTQQEESKIIEEVKKIAKYVNELKLKQSELYKWRELFKVYLDSEVYFKYNETALPSQQKSSEQIKSNLDLFVTNLNKSGIMTRFKKKQSLETFNQFMEMNYHLLKILQFQTINNEALRKILKKFDKQTSLGIQKTFPKLISNDHIFMSGSSLAQSICYIIQESIIKVIPQLDDYSCPICMNIAYKPIRLSCGHLFCVRCLVKMKQDDKTSCPLCRKENAILYADSSNLDLESMELMKKYFPREVKEKLRERDKERYNELRKNANSGEKCIVM</sequence>
<protein>
    <recommendedName>
        <fullName>Transcriptional regulator of yeast form adherence 3</fullName>
    </recommendedName>
</protein>
<reference key="1">
    <citation type="journal article" date="2004" name="Proc. Natl. Acad. Sci. U.S.A.">
        <title>The diploid genome sequence of Candida albicans.</title>
        <authorList>
            <person name="Jones T."/>
            <person name="Federspiel N.A."/>
            <person name="Chibana H."/>
            <person name="Dungan J."/>
            <person name="Kalman S."/>
            <person name="Magee B.B."/>
            <person name="Newport G."/>
            <person name="Thorstenson Y.R."/>
            <person name="Agabian N."/>
            <person name="Magee P.T."/>
            <person name="Davis R.W."/>
            <person name="Scherer S."/>
        </authorList>
    </citation>
    <scope>NUCLEOTIDE SEQUENCE [LARGE SCALE GENOMIC DNA]</scope>
    <source>
        <strain>SC5314 / ATCC MYA-2876</strain>
    </source>
</reference>
<reference key="2">
    <citation type="journal article" date="2007" name="Genome Biol.">
        <title>Assembly of the Candida albicans genome into sixteen supercontigs aligned on the eight chromosomes.</title>
        <authorList>
            <person name="van het Hoog M."/>
            <person name="Rast T.J."/>
            <person name="Martchenko M."/>
            <person name="Grindle S."/>
            <person name="Dignard D."/>
            <person name="Hogues H."/>
            <person name="Cuomo C."/>
            <person name="Berriman M."/>
            <person name="Scherer S."/>
            <person name="Magee B.B."/>
            <person name="Whiteway M."/>
            <person name="Chibana H."/>
            <person name="Nantel A."/>
            <person name="Magee P.T."/>
        </authorList>
    </citation>
    <scope>GENOME REANNOTATION</scope>
    <source>
        <strain>SC5314 / ATCC MYA-2876</strain>
    </source>
</reference>
<reference key="3">
    <citation type="journal article" date="2013" name="Genome Biol.">
        <title>Assembly of a phased diploid Candida albicans genome facilitates allele-specific measurements and provides a simple model for repeat and indel structure.</title>
        <authorList>
            <person name="Muzzey D."/>
            <person name="Schwartz K."/>
            <person name="Weissman J.S."/>
            <person name="Sherlock G."/>
        </authorList>
    </citation>
    <scope>NUCLEOTIDE SEQUENCE [LARGE SCALE GENOMIC DNA]</scope>
    <scope>GENOME REANNOTATION</scope>
    <source>
        <strain>SC5314 / ATCC MYA-2876</strain>
    </source>
</reference>
<reference key="4">
    <citation type="journal article" date="2012" name="Cell">
        <title>A recently evolved transcriptional network controls biofilm development in Candida albicans.</title>
        <authorList>
            <person name="Nobile C.J."/>
            <person name="Fox E.P."/>
            <person name="Nett J.E."/>
            <person name="Sorrells T.R."/>
            <person name="Mitrovich Q.M."/>
            <person name="Hernday A.D."/>
            <person name="Tuch B.B."/>
            <person name="Andes D.R."/>
            <person name="Johnson A.D."/>
        </authorList>
    </citation>
    <scope>INDUCTION</scope>
</reference>
<reference key="5">
    <citation type="journal article" date="2012" name="PLoS Pathog.">
        <title>Portrait of Candida albicans adherence regulators.</title>
        <authorList>
            <person name="Finkel J.S."/>
            <person name="Xu W."/>
            <person name="Huang D."/>
            <person name="Hill E.M."/>
            <person name="Desai J.V."/>
            <person name="Woolford C.A."/>
            <person name="Nett J.E."/>
            <person name="Taff H."/>
            <person name="Norice C.T."/>
            <person name="Andes D.R."/>
            <person name="Lanni F."/>
            <person name="Mitchell A.P."/>
        </authorList>
    </citation>
    <scope>FUNCTION</scope>
    <scope>DISRUPTION PHENOTYPE</scope>
</reference>
<comment type="function">
    <text evidence="4">Transcription factor required for yeast cell adherence to silicone substrate.</text>
</comment>
<comment type="subcellular location">
    <subcellularLocation>
        <location evidence="5">Nucleus</location>
    </subcellularLocation>
</comment>
<comment type="induction">
    <text evidence="3">Expression is induced in biofilm.</text>
</comment>
<comment type="disruption phenotype">
    <text evidence="4">Decreases cell adherence to silicone substrate.</text>
</comment>
<keyword id="KW-0130">Cell adhesion</keyword>
<keyword id="KW-0479">Metal-binding</keyword>
<keyword id="KW-0539">Nucleus</keyword>
<keyword id="KW-1185">Reference proteome</keyword>
<keyword id="KW-0804">Transcription</keyword>
<keyword id="KW-0805">Transcription regulation</keyword>
<keyword id="KW-0862">Zinc</keyword>
<keyword id="KW-0863">Zinc-finger</keyword>
<accession>Q5A1M4</accession>
<accession>A0A1D8PN31</accession>
<evidence type="ECO:0000255" key="1">
    <source>
        <dbReference type="PROSITE-ProRule" id="PRU00175"/>
    </source>
</evidence>
<evidence type="ECO:0000255" key="2">
    <source>
        <dbReference type="PROSITE-ProRule" id="PRU00714"/>
    </source>
</evidence>
<evidence type="ECO:0000269" key="3">
    <source>
    </source>
</evidence>
<evidence type="ECO:0000269" key="4">
    <source>
    </source>
</evidence>
<evidence type="ECO:0000305" key="5"/>
<feature type="chain" id="PRO_0000426090" description="Transcriptional regulator of yeast form adherence 3">
    <location>
        <begin position="1"/>
        <end position="494"/>
    </location>
</feature>
<feature type="domain" description="SPX" evidence="2">
    <location>
        <begin position="1"/>
        <end position="360"/>
    </location>
</feature>
<feature type="zinc finger region" description="RING-type" evidence="1">
    <location>
        <begin position="398"/>
        <end position="437"/>
    </location>
</feature>
<dbReference type="EMBL" id="CP017627">
    <property type="protein sequence ID" value="AOW29538.1"/>
    <property type="molecule type" value="Genomic_DNA"/>
</dbReference>
<dbReference type="RefSeq" id="XP_715733.2">
    <property type="nucleotide sequence ID" value="XM_710640.2"/>
</dbReference>
<dbReference type="SMR" id="Q5A1M4"/>
<dbReference type="STRING" id="237561.Q5A1M4"/>
<dbReference type="EnsemblFungi" id="C5_00980W_A-T">
    <property type="protein sequence ID" value="C5_00980W_A-T-p1"/>
    <property type="gene ID" value="C5_00980W_A"/>
</dbReference>
<dbReference type="GeneID" id="3642652"/>
<dbReference type="KEGG" id="cal:CAALFM_C500980WA"/>
<dbReference type="CGD" id="CAL0000186243">
    <property type="gene designation" value="TRY3"/>
</dbReference>
<dbReference type="VEuPathDB" id="FungiDB:C5_00980W_A"/>
<dbReference type="eggNOG" id="KOG4159">
    <property type="taxonomic scope" value="Eukaryota"/>
</dbReference>
<dbReference type="HOGENOM" id="CLU_017137_2_1_1"/>
<dbReference type="InParanoid" id="Q5A1M4"/>
<dbReference type="OrthoDB" id="5588846at2759"/>
<dbReference type="PRO" id="PR:Q5A1M4"/>
<dbReference type="Proteomes" id="UP000000559">
    <property type="component" value="Chromosome 5"/>
</dbReference>
<dbReference type="GO" id="GO:0005634">
    <property type="term" value="C:nucleus"/>
    <property type="evidence" value="ECO:0007669"/>
    <property type="project" value="UniProtKB-SubCell"/>
</dbReference>
<dbReference type="GO" id="GO:0008270">
    <property type="term" value="F:zinc ion binding"/>
    <property type="evidence" value="ECO:0007669"/>
    <property type="project" value="UniProtKB-KW"/>
</dbReference>
<dbReference type="GO" id="GO:0007155">
    <property type="term" value="P:cell adhesion"/>
    <property type="evidence" value="ECO:0007669"/>
    <property type="project" value="UniProtKB-KW"/>
</dbReference>
<dbReference type="GO" id="GO:1900189">
    <property type="term" value="P:positive regulation of cell adhesion involved in single-species biofilm formation"/>
    <property type="evidence" value="ECO:0000315"/>
    <property type="project" value="CGD"/>
</dbReference>
<dbReference type="GO" id="GO:0010811">
    <property type="term" value="P:positive regulation of cell-substrate adhesion"/>
    <property type="evidence" value="ECO:0000315"/>
    <property type="project" value="CGD"/>
</dbReference>
<dbReference type="GO" id="GO:0006357">
    <property type="term" value="P:regulation of transcription by RNA polymerase II"/>
    <property type="evidence" value="ECO:0000315"/>
    <property type="project" value="CGD"/>
</dbReference>
<dbReference type="GO" id="GO:0044011">
    <property type="term" value="P:single-species biofilm formation on inanimate substrate"/>
    <property type="evidence" value="ECO:0000315"/>
    <property type="project" value="CGD"/>
</dbReference>
<dbReference type="CDD" id="cd23137">
    <property type="entry name" value="RING-HC_TRY3-like"/>
    <property type="match status" value="1"/>
</dbReference>
<dbReference type="FunFam" id="3.30.40.10:FF:000980">
    <property type="entry name" value="Transcriptional regulator of yeast form adherence 3"/>
    <property type="match status" value="1"/>
</dbReference>
<dbReference type="Gene3D" id="3.30.40.10">
    <property type="entry name" value="Zinc/RING finger domain, C3HC4 (zinc finger)"/>
    <property type="match status" value="1"/>
</dbReference>
<dbReference type="InterPro" id="IPR004331">
    <property type="entry name" value="SPX_dom"/>
</dbReference>
<dbReference type="InterPro" id="IPR001841">
    <property type="entry name" value="Znf_RING"/>
</dbReference>
<dbReference type="InterPro" id="IPR013083">
    <property type="entry name" value="Znf_RING/FYVE/PHD"/>
</dbReference>
<dbReference type="InterPro" id="IPR017907">
    <property type="entry name" value="Znf_RING_CS"/>
</dbReference>
<dbReference type="PANTHER" id="PTHR23327">
    <property type="entry name" value="RING FINGER PROTEIN 127"/>
    <property type="match status" value="1"/>
</dbReference>
<dbReference type="PANTHER" id="PTHR23327:SF51">
    <property type="entry name" value="TRANSCRIPTIONAL REGULATOR OF YEAST FORM ADHERENCE 3"/>
    <property type="match status" value="1"/>
</dbReference>
<dbReference type="Pfam" id="PF03105">
    <property type="entry name" value="SPX"/>
    <property type="match status" value="1"/>
</dbReference>
<dbReference type="Pfam" id="PF15227">
    <property type="entry name" value="zf-C3HC4_4"/>
    <property type="match status" value="1"/>
</dbReference>
<dbReference type="SMART" id="SM00184">
    <property type="entry name" value="RING"/>
    <property type="match status" value="1"/>
</dbReference>
<dbReference type="SUPFAM" id="SSF57850">
    <property type="entry name" value="RING/U-box"/>
    <property type="match status" value="1"/>
</dbReference>
<dbReference type="PROSITE" id="PS51382">
    <property type="entry name" value="SPX"/>
    <property type="match status" value="1"/>
</dbReference>
<dbReference type="PROSITE" id="PS00518">
    <property type="entry name" value="ZF_RING_1"/>
    <property type="match status" value="1"/>
</dbReference>
<dbReference type="PROSITE" id="PS50089">
    <property type="entry name" value="ZF_RING_2"/>
    <property type="match status" value="1"/>
</dbReference>